<comment type="function">
    <text evidence="1">Catalyzes the NADPH-dependent reduction of L-glutamate 5-phosphate into L-glutamate 5-semialdehyde and phosphate. The product spontaneously undergoes cyclization to form 1-pyrroline-5-carboxylate.</text>
</comment>
<comment type="catalytic activity">
    <reaction evidence="1">
        <text>L-glutamate 5-semialdehyde + phosphate + NADP(+) = L-glutamyl 5-phosphate + NADPH + H(+)</text>
        <dbReference type="Rhea" id="RHEA:19541"/>
        <dbReference type="ChEBI" id="CHEBI:15378"/>
        <dbReference type="ChEBI" id="CHEBI:43474"/>
        <dbReference type="ChEBI" id="CHEBI:57783"/>
        <dbReference type="ChEBI" id="CHEBI:58066"/>
        <dbReference type="ChEBI" id="CHEBI:58274"/>
        <dbReference type="ChEBI" id="CHEBI:58349"/>
        <dbReference type="EC" id="1.2.1.41"/>
    </reaction>
</comment>
<comment type="pathway">
    <text evidence="1">Amino-acid biosynthesis; L-proline biosynthesis; L-glutamate 5-semialdehyde from L-glutamate: step 2/2.</text>
</comment>
<comment type="subcellular location">
    <subcellularLocation>
        <location evidence="1">Cytoplasm</location>
    </subcellularLocation>
</comment>
<comment type="similarity">
    <text evidence="1">Belongs to the gamma-glutamyl phosphate reductase family.</text>
</comment>
<reference key="1">
    <citation type="journal article" date="2003" name="Proc. Natl. Acad. Sci. U.S.A.">
        <title>The genome sequence of Clostridium tetani, the causative agent of tetanus disease.</title>
        <authorList>
            <person name="Brueggemann H."/>
            <person name="Baeumer S."/>
            <person name="Fricke W.F."/>
            <person name="Wiezer A."/>
            <person name="Liesegang H."/>
            <person name="Decker I."/>
            <person name="Herzberg C."/>
            <person name="Martinez-Arias R."/>
            <person name="Merkl R."/>
            <person name="Henne A."/>
            <person name="Gottschalk G."/>
        </authorList>
    </citation>
    <scope>NUCLEOTIDE SEQUENCE [LARGE SCALE GENOMIC DNA]</scope>
    <source>
        <strain>Massachusetts / E88</strain>
    </source>
</reference>
<accession>Q896G4</accession>
<proteinExistence type="inferred from homology"/>
<protein>
    <recommendedName>
        <fullName evidence="1">Gamma-glutamyl phosphate reductase</fullName>
        <shortName evidence="1">GPR</shortName>
        <ecNumber evidence="1">1.2.1.41</ecNumber>
    </recommendedName>
    <alternativeName>
        <fullName evidence="1">Glutamate-5-semialdehyde dehydrogenase</fullName>
    </alternativeName>
    <alternativeName>
        <fullName evidence="1">Glutamyl-gamma-semialdehyde dehydrogenase</fullName>
        <shortName evidence="1">GSA dehydrogenase</shortName>
    </alternativeName>
</protein>
<sequence>MDDLNKYLINKGKKAKEASRFLSSVDSNFKNKALHKMGEDLKANMNKIIAANKIDMEKGKEKGLSKSLLDRLLIDEKRVNDMVNGLIEVAELPDPIGEVLNMWKRPNGINIGVKRVPLGVIGIIYEARPNVTVDATALCLKSGNAVILRGGSEAINTNKAIGKILENSAIESGLPEGTIQLIETTDREIVNKMLKLNEYIDVLIPRGGRGLIDNVVKNSTVPVIQTGVGLCHVYVDGSANLKMAQDIIVNAKTQRPGVCNALETLLVHKDVANSFLPEIVSEISKYGVESKLCEKSFEVVKGSIKDAKVLSLISEATEEDWDTEYLDLILSIKIVNSLDEALNHIYDHGTKHSEAIITENYTNSQRFLNEVDAAAVYVNASTRFTDGSQFGFGAEIGISTQKLHARGPMGLTQLTTTKYIIYGNGQIR</sequence>
<dbReference type="EC" id="1.2.1.41" evidence="1"/>
<dbReference type="EMBL" id="AE015927">
    <property type="protein sequence ID" value="AAO35626.1"/>
    <property type="molecule type" value="Genomic_DNA"/>
</dbReference>
<dbReference type="RefSeq" id="WP_011099288.1">
    <property type="nucleotide sequence ID" value="NC_004557.1"/>
</dbReference>
<dbReference type="SMR" id="Q896G4"/>
<dbReference type="STRING" id="212717.CTC_01042"/>
<dbReference type="GeneID" id="24252518"/>
<dbReference type="KEGG" id="ctc:CTC_01042"/>
<dbReference type="HOGENOM" id="CLU_030231_0_0_9"/>
<dbReference type="OrthoDB" id="9809970at2"/>
<dbReference type="UniPathway" id="UPA00098">
    <property type="reaction ID" value="UER00360"/>
</dbReference>
<dbReference type="Proteomes" id="UP000001412">
    <property type="component" value="Chromosome"/>
</dbReference>
<dbReference type="GO" id="GO:0005737">
    <property type="term" value="C:cytoplasm"/>
    <property type="evidence" value="ECO:0007669"/>
    <property type="project" value="UniProtKB-SubCell"/>
</dbReference>
<dbReference type="GO" id="GO:0004350">
    <property type="term" value="F:glutamate-5-semialdehyde dehydrogenase activity"/>
    <property type="evidence" value="ECO:0007669"/>
    <property type="project" value="UniProtKB-UniRule"/>
</dbReference>
<dbReference type="GO" id="GO:0050661">
    <property type="term" value="F:NADP binding"/>
    <property type="evidence" value="ECO:0007669"/>
    <property type="project" value="InterPro"/>
</dbReference>
<dbReference type="GO" id="GO:0055129">
    <property type="term" value="P:L-proline biosynthetic process"/>
    <property type="evidence" value="ECO:0007669"/>
    <property type="project" value="UniProtKB-UniRule"/>
</dbReference>
<dbReference type="CDD" id="cd07079">
    <property type="entry name" value="ALDH_F18-19_ProA-GPR"/>
    <property type="match status" value="1"/>
</dbReference>
<dbReference type="FunFam" id="3.40.309.10:FF:000006">
    <property type="entry name" value="Gamma-glutamyl phosphate reductase"/>
    <property type="match status" value="1"/>
</dbReference>
<dbReference type="Gene3D" id="3.40.605.10">
    <property type="entry name" value="Aldehyde Dehydrogenase, Chain A, domain 1"/>
    <property type="match status" value="1"/>
</dbReference>
<dbReference type="Gene3D" id="3.40.309.10">
    <property type="entry name" value="Aldehyde Dehydrogenase, Chain A, domain 2"/>
    <property type="match status" value="1"/>
</dbReference>
<dbReference type="HAMAP" id="MF_00412">
    <property type="entry name" value="ProA"/>
    <property type="match status" value="1"/>
</dbReference>
<dbReference type="InterPro" id="IPR016161">
    <property type="entry name" value="Ald_DH/histidinol_DH"/>
</dbReference>
<dbReference type="InterPro" id="IPR016163">
    <property type="entry name" value="Ald_DH_C"/>
</dbReference>
<dbReference type="InterPro" id="IPR016162">
    <property type="entry name" value="Ald_DH_N"/>
</dbReference>
<dbReference type="InterPro" id="IPR015590">
    <property type="entry name" value="Aldehyde_DH_dom"/>
</dbReference>
<dbReference type="InterPro" id="IPR020593">
    <property type="entry name" value="G-glutamylP_reductase_CS"/>
</dbReference>
<dbReference type="InterPro" id="IPR012134">
    <property type="entry name" value="Glu-5-SA_DH"/>
</dbReference>
<dbReference type="InterPro" id="IPR000965">
    <property type="entry name" value="GPR_dom"/>
</dbReference>
<dbReference type="NCBIfam" id="NF001221">
    <property type="entry name" value="PRK00197.1"/>
    <property type="match status" value="1"/>
</dbReference>
<dbReference type="NCBIfam" id="TIGR00407">
    <property type="entry name" value="proA"/>
    <property type="match status" value="1"/>
</dbReference>
<dbReference type="PANTHER" id="PTHR11063:SF8">
    <property type="entry name" value="DELTA-1-PYRROLINE-5-CARBOXYLATE SYNTHASE"/>
    <property type="match status" value="1"/>
</dbReference>
<dbReference type="PANTHER" id="PTHR11063">
    <property type="entry name" value="GLUTAMATE SEMIALDEHYDE DEHYDROGENASE"/>
    <property type="match status" value="1"/>
</dbReference>
<dbReference type="Pfam" id="PF00171">
    <property type="entry name" value="Aldedh"/>
    <property type="match status" value="1"/>
</dbReference>
<dbReference type="PIRSF" id="PIRSF000151">
    <property type="entry name" value="GPR"/>
    <property type="match status" value="1"/>
</dbReference>
<dbReference type="SUPFAM" id="SSF53720">
    <property type="entry name" value="ALDH-like"/>
    <property type="match status" value="1"/>
</dbReference>
<dbReference type="PROSITE" id="PS01223">
    <property type="entry name" value="PROA"/>
    <property type="match status" value="1"/>
</dbReference>
<keyword id="KW-0028">Amino-acid biosynthesis</keyword>
<keyword id="KW-0963">Cytoplasm</keyword>
<keyword id="KW-0521">NADP</keyword>
<keyword id="KW-0560">Oxidoreductase</keyword>
<keyword id="KW-0641">Proline biosynthesis</keyword>
<keyword id="KW-1185">Reference proteome</keyword>
<evidence type="ECO:0000255" key="1">
    <source>
        <dbReference type="HAMAP-Rule" id="MF_00412"/>
    </source>
</evidence>
<feature type="chain" id="PRO_0000189716" description="Gamma-glutamyl phosphate reductase">
    <location>
        <begin position="1"/>
        <end position="428"/>
    </location>
</feature>
<organism>
    <name type="scientific">Clostridium tetani (strain Massachusetts / E88)</name>
    <dbReference type="NCBI Taxonomy" id="212717"/>
    <lineage>
        <taxon>Bacteria</taxon>
        <taxon>Bacillati</taxon>
        <taxon>Bacillota</taxon>
        <taxon>Clostridia</taxon>
        <taxon>Eubacteriales</taxon>
        <taxon>Clostridiaceae</taxon>
        <taxon>Clostridium</taxon>
    </lineage>
</organism>
<gene>
    <name evidence="1" type="primary">proA</name>
    <name type="ordered locus">CTC_01042</name>
</gene>
<name>PROA_CLOTE</name>